<organism>
    <name type="scientific">Mus musculus</name>
    <name type="common">Mouse</name>
    <dbReference type="NCBI Taxonomy" id="10090"/>
    <lineage>
        <taxon>Eukaryota</taxon>
        <taxon>Metazoa</taxon>
        <taxon>Chordata</taxon>
        <taxon>Craniata</taxon>
        <taxon>Vertebrata</taxon>
        <taxon>Euteleostomi</taxon>
        <taxon>Mammalia</taxon>
        <taxon>Eutheria</taxon>
        <taxon>Euarchontoglires</taxon>
        <taxon>Glires</taxon>
        <taxon>Rodentia</taxon>
        <taxon>Myomorpha</taxon>
        <taxon>Muroidea</taxon>
        <taxon>Muridae</taxon>
        <taxon>Murinae</taxon>
        <taxon>Mus</taxon>
        <taxon>Mus</taxon>
    </lineage>
</organism>
<comment type="function">
    <text evidence="1">Mitochondrial serine transporter that mediates transport of serine into mitochondria, an important step of the one-carbon metabolism pathway. Mitochondrial serine is converted to glycine and formate, which then exits to the cytosol where it is used to generate the charged folates that serve as one-carbon donors.</text>
</comment>
<comment type="catalytic activity">
    <reaction evidence="1">
        <text>L-serine(in) = L-serine(out)</text>
        <dbReference type="Rhea" id="RHEA:35031"/>
        <dbReference type="ChEBI" id="CHEBI:33384"/>
    </reaction>
</comment>
<comment type="subcellular location">
    <subcellularLocation>
        <location evidence="1">Mitochondrion membrane</location>
        <topology evidence="2">Multi-pass membrane protein</topology>
    </subcellularLocation>
</comment>
<comment type="alternative products">
    <event type="alternative splicing"/>
    <isoform>
        <id>Q91V61-1</id>
        <name>1</name>
        <sequence type="displayed"/>
    </isoform>
    <isoform>
        <id>Q91V61-2</id>
        <name>2</name>
        <sequence type="described" ref="VSP_007388"/>
    </isoform>
</comment>
<comment type="tissue specificity">
    <text evidence="3">Widely expressed.</text>
</comment>
<comment type="similarity">
    <text evidence="6">Belongs to the sideroflexin family.</text>
</comment>
<reference key="1">
    <citation type="journal article" date="2001" name="Genes Dev.">
        <title>A mutation in a mitochondrial transmembrane protein is responsible for the pleiotropic hematological and skeletal phenotype of flexed-tail (f/f) mice.</title>
        <authorList>
            <person name="Fleming M.D."/>
            <person name="Campagna D.R."/>
            <person name="Haslett J.N."/>
            <person name="Trenor C.C. III"/>
            <person name="Andrews N.C."/>
        </authorList>
    </citation>
    <scope>NUCLEOTIDE SEQUENCE [MRNA] (ISOFORM 1)</scope>
    <scope>TISSUE SPECIFICITY</scope>
</reference>
<reference key="2">
    <citation type="journal article" date="2005" name="Science">
        <title>The transcriptional landscape of the mammalian genome.</title>
        <authorList>
            <person name="Carninci P."/>
            <person name="Kasukawa T."/>
            <person name="Katayama S."/>
            <person name="Gough J."/>
            <person name="Frith M.C."/>
            <person name="Maeda N."/>
            <person name="Oyama R."/>
            <person name="Ravasi T."/>
            <person name="Lenhard B."/>
            <person name="Wells C."/>
            <person name="Kodzius R."/>
            <person name="Shimokawa K."/>
            <person name="Bajic V.B."/>
            <person name="Brenner S.E."/>
            <person name="Batalov S."/>
            <person name="Forrest A.R."/>
            <person name="Zavolan M."/>
            <person name="Davis M.J."/>
            <person name="Wilming L.G."/>
            <person name="Aidinis V."/>
            <person name="Allen J.E."/>
            <person name="Ambesi-Impiombato A."/>
            <person name="Apweiler R."/>
            <person name="Aturaliya R.N."/>
            <person name="Bailey T.L."/>
            <person name="Bansal M."/>
            <person name="Baxter L."/>
            <person name="Beisel K.W."/>
            <person name="Bersano T."/>
            <person name="Bono H."/>
            <person name="Chalk A.M."/>
            <person name="Chiu K.P."/>
            <person name="Choudhary V."/>
            <person name="Christoffels A."/>
            <person name="Clutterbuck D.R."/>
            <person name="Crowe M.L."/>
            <person name="Dalla E."/>
            <person name="Dalrymple B.P."/>
            <person name="de Bono B."/>
            <person name="Della Gatta G."/>
            <person name="di Bernardo D."/>
            <person name="Down T."/>
            <person name="Engstrom P."/>
            <person name="Fagiolini M."/>
            <person name="Faulkner G."/>
            <person name="Fletcher C.F."/>
            <person name="Fukushima T."/>
            <person name="Furuno M."/>
            <person name="Futaki S."/>
            <person name="Gariboldi M."/>
            <person name="Georgii-Hemming P."/>
            <person name="Gingeras T.R."/>
            <person name="Gojobori T."/>
            <person name="Green R.E."/>
            <person name="Gustincich S."/>
            <person name="Harbers M."/>
            <person name="Hayashi Y."/>
            <person name="Hensch T.K."/>
            <person name="Hirokawa N."/>
            <person name="Hill D."/>
            <person name="Huminiecki L."/>
            <person name="Iacono M."/>
            <person name="Ikeo K."/>
            <person name="Iwama A."/>
            <person name="Ishikawa T."/>
            <person name="Jakt M."/>
            <person name="Kanapin A."/>
            <person name="Katoh M."/>
            <person name="Kawasawa Y."/>
            <person name="Kelso J."/>
            <person name="Kitamura H."/>
            <person name="Kitano H."/>
            <person name="Kollias G."/>
            <person name="Krishnan S.P."/>
            <person name="Kruger A."/>
            <person name="Kummerfeld S.K."/>
            <person name="Kurochkin I.V."/>
            <person name="Lareau L.F."/>
            <person name="Lazarevic D."/>
            <person name="Lipovich L."/>
            <person name="Liu J."/>
            <person name="Liuni S."/>
            <person name="McWilliam S."/>
            <person name="Madan Babu M."/>
            <person name="Madera M."/>
            <person name="Marchionni L."/>
            <person name="Matsuda H."/>
            <person name="Matsuzawa S."/>
            <person name="Miki H."/>
            <person name="Mignone F."/>
            <person name="Miyake S."/>
            <person name="Morris K."/>
            <person name="Mottagui-Tabar S."/>
            <person name="Mulder N."/>
            <person name="Nakano N."/>
            <person name="Nakauchi H."/>
            <person name="Ng P."/>
            <person name="Nilsson R."/>
            <person name="Nishiguchi S."/>
            <person name="Nishikawa S."/>
            <person name="Nori F."/>
            <person name="Ohara O."/>
            <person name="Okazaki Y."/>
            <person name="Orlando V."/>
            <person name="Pang K.C."/>
            <person name="Pavan W.J."/>
            <person name="Pavesi G."/>
            <person name="Pesole G."/>
            <person name="Petrovsky N."/>
            <person name="Piazza S."/>
            <person name="Reed J."/>
            <person name="Reid J.F."/>
            <person name="Ring B.Z."/>
            <person name="Ringwald M."/>
            <person name="Rost B."/>
            <person name="Ruan Y."/>
            <person name="Salzberg S.L."/>
            <person name="Sandelin A."/>
            <person name="Schneider C."/>
            <person name="Schoenbach C."/>
            <person name="Sekiguchi K."/>
            <person name="Semple C.A."/>
            <person name="Seno S."/>
            <person name="Sessa L."/>
            <person name="Sheng Y."/>
            <person name="Shibata Y."/>
            <person name="Shimada H."/>
            <person name="Shimada K."/>
            <person name="Silva D."/>
            <person name="Sinclair B."/>
            <person name="Sperling S."/>
            <person name="Stupka E."/>
            <person name="Sugiura K."/>
            <person name="Sultana R."/>
            <person name="Takenaka Y."/>
            <person name="Taki K."/>
            <person name="Tammoja K."/>
            <person name="Tan S.L."/>
            <person name="Tang S."/>
            <person name="Taylor M.S."/>
            <person name="Tegner J."/>
            <person name="Teichmann S.A."/>
            <person name="Ueda H.R."/>
            <person name="van Nimwegen E."/>
            <person name="Verardo R."/>
            <person name="Wei C.L."/>
            <person name="Yagi K."/>
            <person name="Yamanishi H."/>
            <person name="Zabarovsky E."/>
            <person name="Zhu S."/>
            <person name="Zimmer A."/>
            <person name="Hide W."/>
            <person name="Bult C."/>
            <person name="Grimmond S.M."/>
            <person name="Teasdale R.D."/>
            <person name="Liu E.T."/>
            <person name="Brusic V."/>
            <person name="Quackenbush J."/>
            <person name="Wahlestedt C."/>
            <person name="Mattick J.S."/>
            <person name="Hume D.A."/>
            <person name="Kai C."/>
            <person name="Sasaki D."/>
            <person name="Tomaru Y."/>
            <person name="Fukuda S."/>
            <person name="Kanamori-Katayama M."/>
            <person name="Suzuki M."/>
            <person name="Aoki J."/>
            <person name="Arakawa T."/>
            <person name="Iida J."/>
            <person name="Imamura K."/>
            <person name="Itoh M."/>
            <person name="Kato T."/>
            <person name="Kawaji H."/>
            <person name="Kawagashira N."/>
            <person name="Kawashima T."/>
            <person name="Kojima M."/>
            <person name="Kondo S."/>
            <person name="Konno H."/>
            <person name="Nakano K."/>
            <person name="Ninomiya N."/>
            <person name="Nishio T."/>
            <person name="Okada M."/>
            <person name="Plessy C."/>
            <person name="Shibata K."/>
            <person name="Shiraki T."/>
            <person name="Suzuki S."/>
            <person name="Tagami M."/>
            <person name="Waki K."/>
            <person name="Watahiki A."/>
            <person name="Okamura-Oho Y."/>
            <person name="Suzuki H."/>
            <person name="Kawai J."/>
            <person name="Hayashizaki Y."/>
        </authorList>
    </citation>
    <scope>NUCLEOTIDE SEQUENCE [LARGE SCALE MRNA] (ISOFORMS 1 AND 2)</scope>
    <source>
        <strain>C57BL/6J</strain>
        <tissue>Diencephalon</tissue>
    </source>
</reference>
<reference key="3">
    <citation type="journal article" date="2004" name="Genome Res.">
        <title>The status, quality, and expansion of the NIH full-length cDNA project: the Mammalian Gene Collection (MGC).</title>
        <authorList>
            <consortium name="The MGC Project Team"/>
        </authorList>
    </citation>
    <scope>NUCLEOTIDE SEQUENCE [LARGE SCALE MRNA] (ISOFORM 1)</scope>
    <source>
        <tissue>Mammary gland</tissue>
    </source>
</reference>
<reference key="4">
    <citation type="submission" date="2007-04" db="UniProtKB">
        <authorList>
            <person name="Lubec G."/>
            <person name="Kang S.U."/>
        </authorList>
    </citation>
    <scope>PROTEIN SEQUENCE OF 15-23; 55-69; 72-85; 178-196; 199-213; 223-252 AND 303-319</scope>
    <scope>IDENTIFICATION BY MASS SPECTROMETRY</scope>
    <source>
        <strain>C57BL/6J</strain>
        <tissue>Brain</tissue>
    </source>
</reference>
<reference key="5">
    <citation type="journal article" date="2010" name="Cell">
        <title>A tissue-specific atlas of mouse protein phosphorylation and expression.</title>
        <authorList>
            <person name="Huttlin E.L."/>
            <person name="Jedrychowski M.P."/>
            <person name="Elias J.E."/>
            <person name="Goswami T."/>
            <person name="Rad R."/>
            <person name="Beausoleil S.A."/>
            <person name="Villen J."/>
            <person name="Haas W."/>
            <person name="Sowa M.E."/>
            <person name="Gygi S.P."/>
        </authorList>
    </citation>
    <scope>IDENTIFICATION BY MASS SPECTROMETRY [LARGE SCALE ANALYSIS]</scope>
    <source>
        <tissue>Brain</tissue>
        <tissue>Brown adipose tissue</tissue>
        <tissue>Heart</tissue>
        <tissue>Kidney</tissue>
        <tissue>Lung</tissue>
        <tissue>Pancreas</tissue>
        <tissue>Spleen</tissue>
        <tissue>Testis</tissue>
    </source>
</reference>
<gene>
    <name evidence="4 7" type="primary">Sfxn3</name>
</gene>
<accession>Q91V61</accession>
<accession>Q544M7</accession>
<accession>Q8C1Z2</accession>
<evidence type="ECO:0000250" key="1">
    <source>
        <dbReference type="UniProtKB" id="Q9BWM7"/>
    </source>
</evidence>
<evidence type="ECO:0000255" key="2"/>
<evidence type="ECO:0000269" key="3">
    <source>
    </source>
</evidence>
<evidence type="ECO:0000303" key="4">
    <source>
    </source>
</evidence>
<evidence type="ECO:0000303" key="5">
    <source>
    </source>
</evidence>
<evidence type="ECO:0000305" key="6"/>
<evidence type="ECO:0000312" key="7">
    <source>
        <dbReference type="MGI" id="MGI:2137679"/>
    </source>
</evidence>
<keyword id="KW-0007">Acetylation</keyword>
<keyword id="KW-0025">Alternative splicing</keyword>
<keyword id="KW-0029">Amino-acid transport</keyword>
<keyword id="KW-0903">Direct protein sequencing</keyword>
<keyword id="KW-0472">Membrane</keyword>
<keyword id="KW-0496">Mitochondrion</keyword>
<keyword id="KW-0554">One-carbon metabolism</keyword>
<keyword id="KW-1185">Reference proteome</keyword>
<keyword id="KW-0812">Transmembrane</keyword>
<keyword id="KW-1133">Transmembrane helix</keyword>
<keyword id="KW-0813">Transport</keyword>
<proteinExistence type="evidence at protein level"/>
<sequence>MGDLPLNINIQEPRWDQSTFLGRARHFFTVTDPRNLLLSGEQLEASRNIVQNYRAGVATPGLTEDQLWRAKYVYDSAFHPDTGEKVVLIGRMSAQVPMNMTITGCMLTFYRKTPTVVFWQWVNQSFNAIVNYSNRSGDAPITVQQLGTAYVSATTGAVATALGLKSLTKHLPPLVGRFVPFAAVAAANCINIPLMRQRELQVGIPVTDEAGQRLGHSVTAAKQGIFQVVISRIGMAIPAMAIPPVIMNTLEKKDFLKRRPWLGAPLQVGLVGFCLVFATPLCCALFPQRSSIHVTRLEPELRAQIQAQNPSIDVVYYNKGL</sequence>
<dbReference type="EMBL" id="AF325262">
    <property type="protein sequence ID" value="AAK39430.1"/>
    <property type="molecule type" value="mRNA"/>
</dbReference>
<dbReference type="EMBL" id="AK034514">
    <property type="protein sequence ID" value="BAC28739.1"/>
    <property type="molecule type" value="mRNA"/>
</dbReference>
<dbReference type="EMBL" id="AK089985">
    <property type="protein sequence ID" value="BAC41029.1"/>
    <property type="molecule type" value="mRNA"/>
</dbReference>
<dbReference type="EMBL" id="BC012208">
    <property type="protein sequence ID" value="AAH12208.1"/>
    <property type="molecule type" value="mRNA"/>
</dbReference>
<dbReference type="CCDS" id="CCDS29856.1">
    <molecule id="Q91V61-1"/>
</dbReference>
<dbReference type="CCDS" id="CCDS50448.1">
    <molecule id="Q91V61-2"/>
</dbReference>
<dbReference type="RefSeq" id="NP_001171483.1">
    <molecule id="Q91V61-2"/>
    <property type="nucleotide sequence ID" value="NM_001178012.1"/>
</dbReference>
<dbReference type="RefSeq" id="NP_001349310.1">
    <molecule id="Q91V61-1"/>
    <property type="nucleotide sequence ID" value="NM_001362381.1"/>
</dbReference>
<dbReference type="RefSeq" id="NP_001412777.1">
    <molecule id="Q91V61-1"/>
    <property type="nucleotide sequence ID" value="NM_001425848.1"/>
</dbReference>
<dbReference type="RefSeq" id="NP_444427.1">
    <molecule id="Q91V61-1"/>
    <property type="nucleotide sequence ID" value="NM_053197.4"/>
</dbReference>
<dbReference type="RefSeq" id="XP_006527556.1">
    <property type="nucleotide sequence ID" value="XM_006527493.2"/>
</dbReference>
<dbReference type="BioGRID" id="220499">
    <property type="interactions" value="20"/>
</dbReference>
<dbReference type="FunCoup" id="Q91V61">
    <property type="interactions" value="934"/>
</dbReference>
<dbReference type="IntAct" id="Q91V61">
    <property type="interactions" value="8"/>
</dbReference>
<dbReference type="MINT" id="Q91V61"/>
<dbReference type="STRING" id="10090.ENSMUSP00000059419"/>
<dbReference type="TCDB" id="2.A.54.1.6">
    <property type="family name" value="the sideroflexin (sfxn) family (formerly the mitochondrial tricarboxylate carrier (mtc) family)"/>
</dbReference>
<dbReference type="GlyGen" id="Q91V61">
    <property type="glycosylation" value="2 sites, 1 O-linked glycan (1 site)"/>
</dbReference>
<dbReference type="iPTMnet" id="Q91V61"/>
<dbReference type="PhosphoSitePlus" id="Q91V61"/>
<dbReference type="SwissPalm" id="Q91V61"/>
<dbReference type="jPOST" id="Q91V61"/>
<dbReference type="PaxDb" id="10090-ENSMUSP00000059419"/>
<dbReference type="PeptideAtlas" id="Q91V61"/>
<dbReference type="ProteomicsDB" id="256974">
    <molecule id="Q91V61-1"/>
</dbReference>
<dbReference type="ProteomicsDB" id="256975">
    <molecule id="Q91V61-2"/>
</dbReference>
<dbReference type="Pumba" id="Q91V61"/>
<dbReference type="Antibodypedia" id="2332">
    <property type="antibodies" value="142 antibodies from 25 providers"/>
</dbReference>
<dbReference type="DNASU" id="94280"/>
<dbReference type="Ensembl" id="ENSMUST00000062213.13">
    <molecule id="Q91V61-1"/>
    <property type="protein sequence ID" value="ENSMUSP00000059419.6"/>
    <property type="gene ID" value="ENSMUSG00000025212.18"/>
</dbReference>
<dbReference type="Ensembl" id="ENSMUST00000111954.11">
    <molecule id="Q91V61-2"/>
    <property type="protein sequence ID" value="ENSMUSP00000107585.5"/>
    <property type="gene ID" value="ENSMUSG00000025212.18"/>
</dbReference>
<dbReference type="GeneID" id="94280"/>
<dbReference type="KEGG" id="mmu:94280"/>
<dbReference type="UCSC" id="uc012bml.1">
    <molecule id="Q91V61-1"/>
    <property type="organism name" value="mouse"/>
</dbReference>
<dbReference type="UCSC" id="uc012bmm.1">
    <molecule id="Q91V61-2"/>
    <property type="organism name" value="mouse"/>
</dbReference>
<dbReference type="AGR" id="MGI:2137679"/>
<dbReference type="CTD" id="81855"/>
<dbReference type="MGI" id="MGI:2137679">
    <property type="gene designation" value="Sfxn3"/>
</dbReference>
<dbReference type="VEuPathDB" id="HostDB:ENSMUSG00000025212"/>
<dbReference type="eggNOG" id="KOG3767">
    <property type="taxonomic scope" value="Eukaryota"/>
</dbReference>
<dbReference type="GeneTree" id="ENSGT01030000234641"/>
<dbReference type="InParanoid" id="Q91V61"/>
<dbReference type="OMA" id="STPICCA"/>
<dbReference type="OrthoDB" id="6608471at2759"/>
<dbReference type="PhylomeDB" id="Q91V61"/>
<dbReference type="TreeFam" id="TF313205"/>
<dbReference type="BioGRID-ORCS" id="94280">
    <property type="hits" value="1 hit in 77 CRISPR screens"/>
</dbReference>
<dbReference type="CD-CODE" id="CE726F99">
    <property type="entry name" value="Postsynaptic density"/>
</dbReference>
<dbReference type="ChiTaRS" id="Sfxn3">
    <property type="organism name" value="mouse"/>
</dbReference>
<dbReference type="PRO" id="PR:Q91V61"/>
<dbReference type="Proteomes" id="UP000000589">
    <property type="component" value="Chromosome 19"/>
</dbReference>
<dbReference type="RNAct" id="Q91V61">
    <property type="molecule type" value="protein"/>
</dbReference>
<dbReference type="Bgee" id="ENSMUSG00000025212">
    <property type="expression patterns" value="Expressed in aortic valve and 236 other cell types or tissues"/>
</dbReference>
<dbReference type="ExpressionAtlas" id="Q91V61">
    <property type="expression patterns" value="baseline and differential"/>
</dbReference>
<dbReference type="GO" id="GO:0031966">
    <property type="term" value="C:mitochondrial membrane"/>
    <property type="evidence" value="ECO:0007669"/>
    <property type="project" value="UniProtKB-SubCell"/>
</dbReference>
<dbReference type="GO" id="GO:0005739">
    <property type="term" value="C:mitochondrion"/>
    <property type="evidence" value="ECO:0007005"/>
    <property type="project" value="MGI"/>
</dbReference>
<dbReference type="GO" id="GO:0015194">
    <property type="term" value="F:L-serine transmembrane transporter activity"/>
    <property type="evidence" value="ECO:0000250"/>
    <property type="project" value="UniProtKB"/>
</dbReference>
<dbReference type="GO" id="GO:0015075">
    <property type="term" value="F:monoatomic ion transmembrane transporter activity"/>
    <property type="evidence" value="ECO:0007669"/>
    <property type="project" value="InterPro"/>
</dbReference>
<dbReference type="GO" id="GO:1990542">
    <property type="term" value="P:mitochondrial transmembrane transport"/>
    <property type="evidence" value="ECO:0000250"/>
    <property type="project" value="UniProtKB"/>
</dbReference>
<dbReference type="GO" id="GO:0006730">
    <property type="term" value="P:one-carbon metabolic process"/>
    <property type="evidence" value="ECO:0000250"/>
    <property type="project" value="UniProtKB"/>
</dbReference>
<dbReference type="GO" id="GO:0140300">
    <property type="term" value="P:serine import into mitochondrion"/>
    <property type="evidence" value="ECO:0000250"/>
    <property type="project" value="UniProtKB"/>
</dbReference>
<dbReference type="InterPro" id="IPR004686">
    <property type="entry name" value="Mtc"/>
</dbReference>
<dbReference type="NCBIfam" id="TIGR00798">
    <property type="entry name" value="mtc"/>
    <property type="match status" value="1"/>
</dbReference>
<dbReference type="PANTHER" id="PTHR11153">
    <property type="entry name" value="SIDEROFLEXIN"/>
    <property type="match status" value="1"/>
</dbReference>
<dbReference type="PANTHER" id="PTHR11153:SF20">
    <property type="entry name" value="SIDEROFLEXIN-3"/>
    <property type="match status" value="1"/>
</dbReference>
<dbReference type="Pfam" id="PF03820">
    <property type="entry name" value="SFXNs"/>
    <property type="match status" value="1"/>
</dbReference>
<protein>
    <recommendedName>
        <fullName evidence="4">Sideroflexin-3</fullName>
    </recommendedName>
</protein>
<name>SFXN3_MOUSE</name>
<feature type="chain" id="PRO_0000177038" description="Sideroflexin-3">
    <location>
        <begin position="1"/>
        <end position="321"/>
    </location>
</feature>
<feature type="transmembrane region" description="Helical" evidence="2">
    <location>
        <begin position="146"/>
        <end position="164"/>
    </location>
</feature>
<feature type="transmembrane region" description="Helical" evidence="2">
    <location>
        <begin position="174"/>
        <end position="194"/>
    </location>
</feature>
<feature type="transmembrane region" description="Helical" evidence="2">
    <location>
        <begin position="225"/>
        <end position="245"/>
    </location>
</feature>
<feature type="transmembrane region" description="Helical" evidence="2">
    <location>
        <begin position="266"/>
        <end position="286"/>
    </location>
</feature>
<feature type="modified residue" description="N-acetylmethionine" evidence="1">
    <location>
        <position position="1"/>
    </location>
</feature>
<feature type="splice variant" id="VSP_007388" description="In isoform 2." evidence="5">
    <location>
        <begin position="112"/>
        <end position="144"/>
    </location>
</feature>
<feature type="sequence conflict" description="In Ref. 2; BAC41029." evidence="6" ref="2">
    <original>P</original>
    <variation>A</variation>
    <location>
        <position position="243"/>
    </location>
</feature>